<keyword id="KW-0687">Ribonucleoprotein</keyword>
<keyword id="KW-0689">Ribosomal protein</keyword>
<keyword id="KW-0694">RNA-binding</keyword>
<keyword id="KW-0699">rRNA-binding</keyword>
<keyword id="KW-0820">tRNA-binding</keyword>
<feature type="chain" id="PRO_1000052737" description="Large ribosomal subunit protein uL5">
    <location>
        <begin position="1"/>
        <end position="179"/>
    </location>
</feature>
<sequence>MARLKDYYQKELVAKLKTELGLDNIMEVPAIKKITLNMGVGDAAKDKKIMTFALNDLTAIAGQKPVVTKSKKSIAGFKIRDGWPIGAKVTLRGDRMYEFLDRLITIAIPRIRDFRGLSAKSFDGRGNYSLGMREQISFPEIDYDKVDSIRGLDISITTTAKNDDQGRALLKAFGFPFKS</sequence>
<protein>
    <recommendedName>
        <fullName evidence="1">Large ribosomal subunit protein uL5</fullName>
    </recommendedName>
    <alternativeName>
        <fullName evidence="2">50S ribosomal protein L5</fullName>
    </alternativeName>
</protein>
<proteinExistence type="inferred from homology"/>
<gene>
    <name evidence="1" type="primary">rplE</name>
    <name type="ordered locus">FTA_0263</name>
</gene>
<comment type="function">
    <text evidence="1">This is one of the proteins that bind and probably mediate the attachment of the 5S RNA into the large ribosomal subunit, where it forms part of the central protuberance. In the 70S ribosome it contacts protein S13 of the 30S subunit (bridge B1b), connecting the 2 subunits; this bridge is implicated in subunit movement. Contacts the P site tRNA; the 5S rRNA and some of its associated proteins might help stabilize positioning of ribosome-bound tRNAs.</text>
</comment>
<comment type="subunit">
    <text evidence="1">Part of the 50S ribosomal subunit; part of the 5S rRNA/L5/L18/L25 subcomplex. Contacts the 5S rRNA and the P site tRNA. Forms a bridge to the 30S subunit in the 70S ribosome.</text>
</comment>
<comment type="similarity">
    <text evidence="1">Belongs to the universal ribosomal protein uL5 family.</text>
</comment>
<evidence type="ECO:0000255" key="1">
    <source>
        <dbReference type="HAMAP-Rule" id="MF_01333"/>
    </source>
</evidence>
<evidence type="ECO:0000305" key="2"/>
<organism>
    <name type="scientific">Francisella tularensis subsp. holarctica (strain FTNF002-00 / FTA)</name>
    <dbReference type="NCBI Taxonomy" id="458234"/>
    <lineage>
        <taxon>Bacteria</taxon>
        <taxon>Pseudomonadati</taxon>
        <taxon>Pseudomonadota</taxon>
        <taxon>Gammaproteobacteria</taxon>
        <taxon>Thiotrichales</taxon>
        <taxon>Francisellaceae</taxon>
        <taxon>Francisella</taxon>
    </lineage>
</organism>
<accession>A7N9T7</accession>
<dbReference type="EMBL" id="CP000803">
    <property type="protein sequence ID" value="ABU60740.1"/>
    <property type="molecule type" value="Genomic_DNA"/>
</dbReference>
<dbReference type="RefSeq" id="WP_003014352.1">
    <property type="nucleotide sequence ID" value="NC_009749.1"/>
</dbReference>
<dbReference type="SMR" id="A7N9T7"/>
<dbReference type="GeneID" id="75264249"/>
<dbReference type="KEGG" id="fta:FTA_0263"/>
<dbReference type="HOGENOM" id="CLU_061015_2_1_6"/>
<dbReference type="GO" id="GO:1990904">
    <property type="term" value="C:ribonucleoprotein complex"/>
    <property type="evidence" value="ECO:0007669"/>
    <property type="project" value="UniProtKB-KW"/>
</dbReference>
<dbReference type="GO" id="GO:0005840">
    <property type="term" value="C:ribosome"/>
    <property type="evidence" value="ECO:0007669"/>
    <property type="project" value="UniProtKB-KW"/>
</dbReference>
<dbReference type="GO" id="GO:0019843">
    <property type="term" value="F:rRNA binding"/>
    <property type="evidence" value="ECO:0007669"/>
    <property type="project" value="UniProtKB-UniRule"/>
</dbReference>
<dbReference type="GO" id="GO:0003735">
    <property type="term" value="F:structural constituent of ribosome"/>
    <property type="evidence" value="ECO:0007669"/>
    <property type="project" value="InterPro"/>
</dbReference>
<dbReference type="GO" id="GO:0000049">
    <property type="term" value="F:tRNA binding"/>
    <property type="evidence" value="ECO:0007669"/>
    <property type="project" value="UniProtKB-UniRule"/>
</dbReference>
<dbReference type="GO" id="GO:0006412">
    <property type="term" value="P:translation"/>
    <property type="evidence" value="ECO:0007669"/>
    <property type="project" value="UniProtKB-UniRule"/>
</dbReference>
<dbReference type="FunFam" id="3.30.1440.10:FF:000001">
    <property type="entry name" value="50S ribosomal protein L5"/>
    <property type="match status" value="1"/>
</dbReference>
<dbReference type="Gene3D" id="3.30.1440.10">
    <property type="match status" value="1"/>
</dbReference>
<dbReference type="HAMAP" id="MF_01333_B">
    <property type="entry name" value="Ribosomal_uL5_B"/>
    <property type="match status" value="1"/>
</dbReference>
<dbReference type="InterPro" id="IPR002132">
    <property type="entry name" value="Ribosomal_uL5"/>
</dbReference>
<dbReference type="InterPro" id="IPR020930">
    <property type="entry name" value="Ribosomal_uL5_bac-type"/>
</dbReference>
<dbReference type="InterPro" id="IPR031309">
    <property type="entry name" value="Ribosomal_uL5_C"/>
</dbReference>
<dbReference type="InterPro" id="IPR020929">
    <property type="entry name" value="Ribosomal_uL5_CS"/>
</dbReference>
<dbReference type="InterPro" id="IPR022803">
    <property type="entry name" value="Ribosomal_uL5_dom_sf"/>
</dbReference>
<dbReference type="InterPro" id="IPR031310">
    <property type="entry name" value="Ribosomal_uL5_N"/>
</dbReference>
<dbReference type="NCBIfam" id="NF000585">
    <property type="entry name" value="PRK00010.1"/>
    <property type="match status" value="1"/>
</dbReference>
<dbReference type="PANTHER" id="PTHR11994">
    <property type="entry name" value="60S RIBOSOMAL PROTEIN L11-RELATED"/>
    <property type="match status" value="1"/>
</dbReference>
<dbReference type="Pfam" id="PF00281">
    <property type="entry name" value="Ribosomal_L5"/>
    <property type="match status" value="1"/>
</dbReference>
<dbReference type="Pfam" id="PF00673">
    <property type="entry name" value="Ribosomal_L5_C"/>
    <property type="match status" value="1"/>
</dbReference>
<dbReference type="PIRSF" id="PIRSF002161">
    <property type="entry name" value="Ribosomal_L5"/>
    <property type="match status" value="1"/>
</dbReference>
<dbReference type="SUPFAM" id="SSF55282">
    <property type="entry name" value="RL5-like"/>
    <property type="match status" value="1"/>
</dbReference>
<dbReference type="PROSITE" id="PS00358">
    <property type="entry name" value="RIBOSOMAL_L5"/>
    <property type="match status" value="1"/>
</dbReference>
<reference key="1">
    <citation type="journal article" date="2009" name="PLoS ONE">
        <title>Complete genome sequence of Francisella tularensis subspecies holarctica FTNF002-00.</title>
        <authorList>
            <person name="Barabote R.D."/>
            <person name="Xie G."/>
            <person name="Brettin T.S."/>
            <person name="Hinrichs S.H."/>
            <person name="Fey P.D."/>
            <person name="Jay J.J."/>
            <person name="Engle J.L."/>
            <person name="Godbole S.D."/>
            <person name="Noronha J.M."/>
            <person name="Scheuermann R.H."/>
            <person name="Zhou L.W."/>
            <person name="Lion C."/>
            <person name="Dempsey M.P."/>
        </authorList>
    </citation>
    <scope>NUCLEOTIDE SEQUENCE [LARGE SCALE GENOMIC DNA]</scope>
    <source>
        <strain>FTNF002-00 / FTA</strain>
    </source>
</reference>
<name>RL5_FRATF</name>